<gene>
    <name evidence="1" type="primary">ureF</name>
    <name type="ordered locus">YPO2669</name>
    <name type="ordered locus">y1241</name>
    <name type="ordered locus">YP_2470</name>
</gene>
<organism>
    <name type="scientific">Yersinia pestis</name>
    <dbReference type="NCBI Taxonomy" id="632"/>
    <lineage>
        <taxon>Bacteria</taxon>
        <taxon>Pseudomonadati</taxon>
        <taxon>Pseudomonadota</taxon>
        <taxon>Gammaproteobacteria</taxon>
        <taxon>Enterobacterales</taxon>
        <taxon>Yersiniaceae</taxon>
        <taxon>Yersinia</taxon>
    </lineage>
</organism>
<accession>Q9ZFR7</accession>
<accession>Q0WDM0</accession>
<feature type="chain" id="PRO_0000067658" description="Urease accessory protein UreF">
    <location>
        <begin position="1"/>
        <end position="228"/>
    </location>
</feature>
<feature type="sequence conflict" description="In Ref. 1; AAC78636." evidence="2" ref="1">
    <original>V</original>
    <variation>M</variation>
    <location>
        <position position="70"/>
    </location>
</feature>
<keyword id="KW-0143">Chaperone</keyword>
<keyword id="KW-0963">Cytoplasm</keyword>
<keyword id="KW-0996">Nickel insertion</keyword>
<keyword id="KW-1185">Reference proteome</keyword>
<sequence length="228" mass="25037">MNASDLIRIMQFGDSVLPVGAFTFSNGVESAIQTGIVHDVATLKGFVLTALKQAASCDGMGVVVAHRAVVADDRDGIIRADWAVNNRKLNEESRLMATRMGKKLAEMSIHVVEHPLISWWLEQIKNGNTAGTYPVTQAVVMAAQGIGQREVVVMHQYGVAMTILSAAMRLMRVTHFDTQHILFELNHDIEKFCDIAEIGDINQMSSYVPIVDVLAAVHVKAHVRLFSN</sequence>
<proteinExistence type="inferred from homology"/>
<evidence type="ECO:0000255" key="1">
    <source>
        <dbReference type="HAMAP-Rule" id="MF_01385"/>
    </source>
</evidence>
<evidence type="ECO:0000305" key="2"/>
<evidence type="ECO:0000305" key="3">
    <source>
    </source>
</evidence>
<protein>
    <recommendedName>
        <fullName evidence="1">Urease accessory protein UreF</fullName>
    </recommendedName>
</protein>
<name>UREF_YERPE</name>
<reference key="1">
    <citation type="journal article" date="2001" name="Infect. Immun.">
        <title>Silencing and reactivation of urease in Yersinia pestis is determined by one G residue at a specific position in the ureD gene.</title>
        <authorList>
            <person name="Sebbane F."/>
            <person name="Devalckenaere A."/>
            <person name="Foulon J."/>
            <person name="Carniel E."/>
            <person name="Simonet M."/>
        </authorList>
    </citation>
    <scope>NUCLEOTIDE SEQUENCE [GENOMIC DNA]</scope>
    <scope>LACK OF ROLE IN VIRULENCE</scope>
    <source>
        <strain>6/69M</strain>
    </source>
</reference>
<reference key="2">
    <citation type="journal article" date="2001" name="Nature">
        <title>Genome sequence of Yersinia pestis, the causative agent of plague.</title>
        <authorList>
            <person name="Parkhill J."/>
            <person name="Wren B.W."/>
            <person name="Thomson N.R."/>
            <person name="Titball R.W."/>
            <person name="Holden M.T.G."/>
            <person name="Prentice M.B."/>
            <person name="Sebaihia M."/>
            <person name="James K.D."/>
            <person name="Churcher C.M."/>
            <person name="Mungall K.L."/>
            <person name="Baker S."/>
            <person name="Basham D."/>
            <person name="Bentley S.D."/>
            <person name="Brooks K."/>
            <person name="Cerdeno-Tarraga A.-M."/>
            <person name="Chillingworth T."/>
            <person name="Cronin A."/>
            <person name="Davies R.M."/>
            <person name="Davis P."/>
            <person name="Dougan G."/>
            <person name="Feltwell T."/>
            <person name="Hamlin N."/>
            <person name="Holroyd S."/>
            <person name="Jagels K."/>
            <person name="Karlyshev A.V."/>
            <person name="Leather S."/>
            <person name="Moule S."/>
            <person name="Oyston P.C.F."/>
            <person name="Quail M.A."/>
            <person name="Rutherford K.M."/>
            <person name="Simmonds M."/>
            <person name="Skelton J."/>
            <person name="Stevens K."/>
            <person name="Whitehead S."/>
            <person name="Barrell B.G."/>
        </authorList>
    </citation>
    <scope>NUCLEOTIDE SEQUENCE [LARGE SCALE GENOMIC DNA]</scope>
    <source>
        <strain>CO-92 / Biovar Orientalis</strain>
    </source>
</reference>
<reference key="3">
    <citation type="journal article" date="2002" name="J. Bacteriol.">
        <title>Genome sequence of Yersinia pestis KIM.</title>
        <authorList>
            <person name="Deng W."/>
            <person name="Burland V."/>
            <person name="Plunkett G. III"/>
            <person name="Boutin A."/>
            <person name="Mayhew G.F."/>
            <person name="Liss P."/>
            <person name="Perna N.T."/>
            <person name="Rose D.J."/>
            <person name="Mau B."/>
            <person name="Zhou S."/>
            <person name="Schwartz D.C."/>
            <person name="Fetherston J.D."/>
            <person name="Lindler L.E."/>
            <person name="Brubaker R.R."/>
            <person name="Plano G.V."/>
            <person name="Straley S.C."/>
            <person name="McDonough K.A."/>
            <person name="Nilles M.L."/>
            <person name="Matson J.S."/>
            <person name="Blattner F.R."/>
            <person name="Perry R.D."/>
        </authorList>
    </citation>
    <scope>NUCLEOTIDE SEQUENCE [LARGE SCALE GENOMIC DNA]</scope>
    <source>
        <strain>KIM10+ / Biovar Mediaevalis</strain>
    </source>
</reference>
<reference key="4">
    <citation type="journal article" date="2004" name="DNA Res.">
        <title>Complete genome sequence of Yersinia pestis strain 91001, an isolate avirulent to humans.</title>
        <authorList>
            <person name="Song Y."/>
            <person name="Tong Z."/>
            <person name="Wang J."/>
            <person name="Wang L."/>
            <person name="Guo Z."/>
            <person name="Han Y."/>
            <person name="Zhang J."/>
            <person name="Pei D."/>
            <person name="Zhou D."/>
            <person name="Qin H."/>
            <person name="Pang X."/>
            <person name="Han Y."/>
            <person name="Zhai J."/>
            <person name="Li M."/>
            <person name="Cui B."/>
            <person name="Qi Z."/>
            <person name="Jin L."/>
            <person name="Dai R."/>
            <person name="Chen F."/>
            <person name="Li S."/>
            <person name="Ye C."/>
            <person name="Du Z."/>
            <person name="Lin W."/>
            <person name="Wang J."/>
            <person name="Yu J."/>
            <person name="Yang H."/>
            <person name="Wang J."/>
            <person name="Huang P."/>
            <person name="Yang R."/>
        </authorList>
    </citation>
    <scope>NUCLEOTIDE SEQUENCE [LARGE SCALE GENOMIC DNA]</scope>
    <source>
        <strain>91001 / Biovar Mediaevalis</strain>
    </source>
</reference>
<comment type="function">
    <text evidence="1">Required for maturation of urease via the functional incorporation of the urease nickel metallocenter.</text>
</comment>
<comment type="subunit">
    <text evidence="1">UreD, UreF and UreG form a complex that acts as a GTP-hydrolysis-dependent molecular chaperone, activating the urease apoprotein by helping to assemble the nickel containing metallocenter of UreC. The UreE protein probably delivers the nickel.</text>
</comment>
<comment type="subcellular location">
    <subcellularLocation>
        <location evidence="1">Cytoplasm</location>
    </subcellularLocation>
</comment>
<comment type="similarity">
    <text evidence="1">Belongs to the UreF family.</text>
</comment>
<comment type="caution">
    <text evidence="3">The last gene of this probable operon, ureD, gives rise to a truncated protein. Absence of ureD prevents expression of active urease. Correction of the mutation does not effect virulence in mice in any detectable fashion, suggesting urease is not important in the virulence of Y.pestis (PubMed:11119503).</text>
</comment>
<dbReference type="EMBL" id="AF095636">
    <property type="protein sequence ID" value="AAC78636.1"/>
    <property type="molecule type" value="Genomic_DNA"/>
</dbReference>
<dbReference type="EMBL" id="AL590842">
    <property type="protein sequence ID" value="CAL21288.1"/>
    <property type="molecule type" value="Genomic_DNA"/>
</dbReference>
<dbReference type="EMBL" id="AE009952">
    <property type="protein sequence ID" value="AAM84816.1"/>
    <property type="molecule type" value="Genomic_DNA"/>
</dbReference>
<dbReference type="EMBL" id="AE017042">
    <property type="protein sequence ID" value="AAS62670.1"/>
    <property type="molecule type" value="Genomic_DNA"/>
</dbReference>
<dbReference type="PIR" id="AE0325">
    <property type="entry name" value="AE0325"/>
</dbReference>
<dbReference type="RefSeq" id="WP_002212231.1">
    <property type="nucleotide sequence ID" value="NZ_WUCM01000006.1"/>
</dbReference>
<dbReference type="RefSeq" id="YP_002347618.1">
    <property type="nucleotide sequence ID" value="NC_003143.1"/>
</dbReference>
<dbReference type="SMR" id="Q9ZFR7"/>
<dbReference type="STRING" id="214092.YPO2669"/>
<dbReference type="PaxDb" id="214092-YPO2669"/>
<dbReference type="DNASU" id="1146188"/>
<dbReference type="EnsemblBacteria" id="AAS62670">
    <property type="protein sequence ID" value="AAS62670"/>
    <property type="gene ID" value="YP_2470"/>
</dbReference>
<dbReference type="KEGG" id="ype:YPO2669"/>
<dbReference type="KEGG" id="ypk:y1241"/>
<dbReference type="KEGG" id="ypm:YP_2470"/>
<dbReference type="PATRIC" id="fig|214092.21.peg.3103"/>
<dbReference type="eggNOG" id="COG0830">
    <property type="taxonomic scope" value="Bacteria"/>
</dbReference>
<dbReference type="HOGENOM" id="CLU_049215_4_0_6"/>
<dbReference type="OMA" id="FIRYETH"/>
<dbReference type="OrthoDB" id="9798772at2"/>
<dbReference type="Proteomes" id="UP000000815">
    <property type="component" value="Chromosome"/>
</dbReference>
<dbReference type="Proteomes" id="UP000001019">
    <property type="component" value="Chromosome"/>
</dbReference>
<dbReference type="Proteomes" id="UP000002490">
    <property type="component" value="Chromosome"/>
</dbReference>
<dbReference type="GO" id="GO:0005737">
    <property type="term" value="C:cytoplasm"/>
    <property type="evidence" value="ECO:0007669"/>
    <property type="project" value="UniProtKB-SubCell"/>
</dbReference>
<dbReference type="GO" id="GO:0016151">
    <property type="term" value="F:nickel cation binding"/>
    <property type="evidence" value="ECO:0007669"/>
    <property type="project" value="UniProtKB-UniRule"/>
</dbReference>
<dbReference type="Gene3D" id="1.10.4190.10">
    <property type="entry name" value="Urease accessory protein UreF"/>
    <property type="match status" value="1"/>
</dbReference>
<dbReference type="HAMAP" id="MF_01385">
    <property type="entry name" value="UreF"/>
    <property type="match status" value="1"/>
</dbReference>
<dbReference type="InterPro" id="IPR002639">
    <property type="entry name" value="UreF"/>
</dbReference>
<dbReference type="InterPro" id="IPR038277">
    <property type="entry name" value="UreF_sf"/>
</dbReference>
<dbReference type="PANTHER" id="PTHR33620">
    <property type="entry name" value="UREASE ACCESSORY PROTEIN F"/>
    <property type="match status" value="1"/>
</dbReference>
<dbReference type="PANTHER" id="PTHR33620:SF1">
    <property type="entry name" value="UREASE ACCESSORY PROTEIN F"/>
    <property type="match status" value="1"/>
</dbReference>
<dbReference type="Pfam" id="PF01730">
    <property type="entry name" value="UreF"/>
    <property type="match status" value="1"/>
</dbReference>
<dbReference type="PIRSF" id="PIRSF009467">
    <property type="entry name" value="Ureas_acces_UreF"/>
    <property type="match status" value="1"/>
</dbReference>